<dbReference type="EC" id="2.3.3.16"/>
<dbReference type="EMBL" id="HE601459">
    <property type="protein sequence ID" value="CAP29361.1"/>
    <property type="molecule type" value="Genomic_DNA"/>
</dbReference>
<dbReference type="SMR" id="Q61JF9"/>
<dbReference type="FunCoup" id="Q61JF9">
    <property type="interactions" value="1978"/>
</dbReference>
<dbReference type="STRING" id="6238.Q61JF9"/>
<dbReference type="EnsemblMetazoa" id="CBG09810.1">
    <property type="protein sequence ID" value="CBG09810.1"/>
    <property type="gene ID" value="WBGene00031330"/>
</dbReference>
<dbReference type="KEGG" id="cbr:CBG_09810"/>
<dbReference type="CTD" id="8583506"/>
<dbReference type="WormBase" id="CBG09810">
    <property type="protein sequence ID" value="CBP02471"/>
    <property type="gene ID" value="WBGene00031330"/>
    <property type="gene designation" value="Cbr-cts-1"/>
</dbReference>
<dbReference type="eggNOG" id="KOG2617">
    <property type="taxonomic scope" value="Eukaryota"/>
</dbReference>
<dbReference type="HOGENOM" id="CLU_022049_2_1_1"/>
<dbReference type="InParanoid" id="Q61JF9"/>
<dbReference type="OMA" id="VLEWLFK"/>
<dbReference type="OrthoDB" id="8017587at2759"/>
<dbReference type="UniPathway" id="UPA00223">
    <property type="reaction ID" value="UER00717"/>
</dbReference>
<dbReference type="Proteomes" id="UP000008549">
    <property type="component" value="Unassembled WGS sequence"/>
</dbReference>
<dbReference type="GO" id="GO:0005759">
    <property type="term" value="C:mitochondrial matrix"/>
    <property type="evidence" value="ECO:0000250"/>
    <property type="project" value="UniProtKB"/>
</dbReference>
<dbReference type="GO" id="GO:0004108">
    <property type="term" value="F:citrate (Si)-synthase activity"/>
    <property type="evidence" value="ECO:0000250"/>
    <property type="project" value="UniProtKB"/>
</dbReference>
<dbReference type="GO" id="GO:0005975">
    <property type="term" value="P:carbohydrate metabolic process"/>
    <property type="evidence" value="ECO:0000250"/>
    <property type="project" value="UniProtKB"/>
</dbReference>
<dbReference type="GO" id="GO:0006101">
    <property type="term" value="P:citrate metabolic process"/>
    <property type="evidence" value="ECO:0007669"/>
    <property type="project" value="InterPro"/>
</dbReference>
<dbReference type="GO" id="GO:0006099">
    <property type="term" value="P:tricarboxylic acid cycle"/>
    <property type="evidence" value="ECO:0000318"/>
    <property type="project" value="GO_Central"/>
</dbReference>
<dbReference type="CDD" id="cd06105">
    <property type="entry name" value="ScCit1-2_like"/>
    <property type="match status" value="1"/>
</dbReference>
<dbReference type="FunFam" id="1.10.230.10:FF:000001">
    <property type="entry name" value="Citrate synthase"/>
    <property type="match status" value="1"/>
</dbReference>
<dbReference type="FunFam" id="1.10.580.10:FF:000001">
    <property type="entry name" value="Citrate synthase"/>
    <property type="match status" value="1"/>
</dbReference>
<dbReference type="Gene3D" id="1.10.580.10">
    <property type="entry name" value="Citrate Synthase, domain 1"/>
    <property type="match status" value="1"/>
</dbReference>
<dbReference type="Gene3D" id="1.10.230.10">
    <property type="entry name" value="Cytochrome P450-Terp, domain 2"/>
    <property type="match status" value="1"/>
</dbReference>
<dbReference type="InterPro" id="IPR016142">
    <property type="entry name" value="Citrate_synth-like_lrg_a-sub"/>
</dbReference>
<dbReference type="InterPro" id="IPR016143">
    <property type="entry name" value="Citrate_synth-like_sm_a-sub"/>
</dbReference>
<dbReference type="InterPro" id="IPR002020">
    <property type="entry name" value="Citrate_synthase"/>
</dbReference>
<dbReference type="InterPro" id="IPR019810">
    <property type="entry name" value="Citrate_synthase_AS"/>
</dbReference>
<dbReference type="InterPro" id="IPR010109">
    <property type="entry name" value="Citrate_synthase_euk"/>
</dbReference>
<dbReference type="InterPro" id="IPR036969">
    <property type="entry name" value="Citrate_synthase_sf"/>
</dbReference>
<dbReference type="NCBIfam" id="TIGR01793">
    <property type="entry name" value="cit_synth_euk"/>
    <property type="match status" value="1"/>
</dbReference>
<dbReference type="NCBIfam" id="NF007128">
    <property type="entry name" value="PRK09569.1"/>
    <property type="match status" value="1"/>
</dbReference>
<dbReference type="PANTHER" id="PTHR11739">
    <property type="entry name" value="CITRATE SYNTHASE"/>
    <property type="match status" value="1"/>
</dbReference>
<dbReference type="PANTHER" id="PTHR11739:SF8">
    <property type="entry name" value="CITRATE SYNTHASE, MITOCHONDRIAL"/>
    <property type="match status" value="1"/>
</dbReference>
<dbReference type="Pfam" id="PF00285">
    <property type="entry name" value="Citrate_synt"/>
    <property type="match status" value="1"/>
</dbReference>
<dbReference type="PRINTS" id="PR00143">
    <property type="entry name" value="CITRTSNTHASE"/>
</dbReference>
<dbReference type="SUPFAM" id="SSF48256">
    <property type="entry name" value="Citrate synthase"/>
    <property type="match status" value="1"/>
</dbReference>
<dbReference type="PROSITE" id="PS00480">
    <property type="entry name" value="CITRATE_SYNTHASE"/>
    <property type="match status" value="1"/>
</dbReference>
<comment type="catalytic activity">
    <reaction evidence="3">
        <text>oxaloacetate + acetyl-CoA + H2O = citrate + CoA + H(+)</text>
        <dbReference type="Rhea" id="RHEA:16845"/>
        <dbReference type="ChEBI" id="CHEBI:15377"/>
        <dbReference type="ChEBI" id="CHEBI:15378"/>
        <dbReference type="ChEBI" id="CHEBI:16452"/>
        <dbReference type="ChEBI" id="CHEBI:16947"/>
        <dbReference type="ChEBI" id="CHEBI:57287"/>
        <dbReference type="ChEBI" id="CHEBI:57288"/>
        <dbReference type="EC" id="2.3.3.16"/>
    </reaction>
</comment>
<comment type="pathway">
    <text>Carbohydrate metabolism; tricarboxylic acid cycle; isocitrate from oxaloacetate: step 1/2.</text>
</comment>
<comment type="subunit">
    <text evidence="1">Homodimer.</text>
</comment>
<comment type="subcellular location">
    <subcellularLocation>
        <location evidence="1">Mitochondrion matrix</location>
    </subcellularLocation>
</comment>
<comment type="miscellaneous">
    <text>Citrate synthase is found in nearly all cells capable of oxidative metabolism.</text>
</comment>
<comment type="similarity">
    <text evidence="4">Belongs to the citrate synthase family.</text>
</comment>
<accession>Q61JF9</accession>
<accession>A8X9P6</accession>
<keyword id="KW-0496">Mitochondrion</keyword>
<keyword id="KW-1185">Reference proteome</keyword>
<keyword id="KW-0808">Transferase</keyword>
<keyword id="KW-0809">Transit peptide</keyword>
<keyword id="KW-0816">Tricarboxylic acid cycle</keyword>
<evidence type="ECO:0000250" key="1"/>
<evidence type="ECO:0000255" key="2"/>
<evidence type="ECO:0000255" key="3">
    <source>
        <dbReference type="PROSITE-ProRule" id="PRU10117"/>
    </source>
</evidence>
<evidence type="ECO:0000305" key="4"/>
<sequence length="468" mass="51615">MPITGTVLRRFITKGVIPMCQVAPLSTSAEGSTNLKEVLSKKIPAHNAKVKSFRAEHGNTVVQSVNIDMIYGGMRSMKGMVTETSVLDPEEGIRFRGYSIPECQKLLPKAKGGEEPLPEAIWWLLCTGDVPSEAQTAAITKEWNARADLPTHVVRMLDNFPDNLHPMAQFIAAIAALNNESKFAGAYARGVAKASYWEYAYEDSMDLLAKLPTVAAIIYRNLYRDGSAVSVIDPKKDWSANFSSMLGYDDPLFAELMRLYLVIHSDHEGGNVSAHTSHLVGSALSDPYLAFSAAMAGLAGPLHGLANQEVLVFLNKIVGEIGFNYTEEQLKEWVWKHLKSGQVVPGYGHAVLRKTDPRYECQREFALKHLPNDDLFKLVSTLYKITPGILLEQGKAKNPWPNVDSHSGVLLQYFGMTEMSFYTVLFGVSRALGCLSQLIWARGMGLPLERPKSHSTEGLIKLAMAAKK</sequence>
<protein>
    <recommendedName>
        <fullName>Probable citrate synthase, mitochondrial</fullName>
        <ecNumber>2.3.3.16</ecNumber>
    </recommendedName>
</protein>
<organism>
    <name type="scientific">Caenorhabditis briggsae</name>
    <dbReference type="NCBI Taxonomy" id="6238"/>
    <lineage>
        <taxon>Eukaryota</taxon>
        <taxon>Metazoa</taxon>
        <taxon>Ecdysozoa</taxon>
        <taxon>Nematoda</taxon>
        <taxon>Chromadorea</taxon>
        <taxon>Rhabditida</taxon>
        <taxon>Rhabditina</taxon>
        <taxon>Rhabditomorpha</taxon>
        <taxon>Rhabditoidea</taxon>
        <taxon>Rhabditidae</taxon>
        <taxon>Peloderinae</taxon>
        <taxon>Caenorhabditis</taxon>
    </lineage>
</organism>
<feature type="transit peptide" description="Mitochondrion" evidence="2">
    <location>
        <begin position="1"/>
        <end status="unknown"/>
    </location>
</feature>
<feature type="chain" id="PRO_0000291600" description="Probable citrate synthase, mitochondrial">
    <location>
        <begin status="unknown"/>
        <end position="468"/>
    </location>
</feature>
<feature type="active site" evidence="3">
    <location>
        <position position="303"/>
    </location>
</feature>
<feature type="active site" evidence="3">
    <location>
        <position position="349"/>
    </location>
</feature>
<feature type="active site" evidence="3">
    <location>
        <position position="404"/>
    </location>
</feature>
<gene>
    <name type="primary">cts-1</name>
    <name type="ORF">CBG09810</name>
</gene>
<proteinExistence type="inferred from homology"/>
<reference key="1">
    <citation type="journal article" date="2003" name="PLoS Biol.">
        <title>The genome sequence of Caenorhabditis briggsae: a platform for comparative genomics.</title>
        <authorList>
            <person name="Stein L.D."/>
            <person name="Bao Z."/>
            <person name="Blasiar D."/>
            <person name="Blumenthal T."/>
            <person name="Brent M.R."/>
            <person name="Chen N."/>
            <person name="Chinwalla A."/>
            <person name="Clarke L."/>
            <person name="Clee C."/>
            <person name="Coghlan A."/>
            <person name="Coulson A."/>
            <person name="D'Eustachio P."/>
            <person name="Fitch D.H.A."/>
            <person name="Fulton L.A."/>
            <person name="Fulton R.E."/>
            <person name="Griffiths-Jones S."/>
            <person name="Harris T.W."/>
            <person name="Hillier L.W."/>
            <person name="Kamath R."/>
            <person name="Kuwabara P.E."/>
            <person name="Mardis E.R."/>
            <person name="Marra M.A."/>
            <person name="Miner T.L."/>
            <person name="Minx P."/>
            <person name="Mullikin J.C."/>
            <person name="Plumb R.W."/>
            <person name="Rogers J."/>
            <person name="Schein J.E."/>
            <person name="Sohrmann M."/>
            <person name="Spieth J."/>
            <person name="Stajich J.E."/>
            <person name="Wei C."/>
            <person name="Willey D."/>
            <person name="Wilson R.K."/>
            <person name="Durbin R.M."/>
            <person name="Waterston R.H."/>
        </authorList>
    </citation>
    <scope>NUCLEOTIDE SEQUENCE [LARGE SCALE GENOMIC DNA]</scope>
    <source>
        <strain>AF16</strain>
    </source>
</reference>
<name>CISY_CAEBR</name>